<gene>
    <name evidence="1" type="primary">rpo6</name>
    <name evidence="1" type="synonym">rpoK</name>
    <name type="ordered locus">TON_0110</name>
</gene>
<comment type="function">
    <text evidence="1">DNA-dependent RNA polymerase (RNAP) catalyzes the transcription of DNA into RNA using the four ribonucleoside triphosphates as substrates.</text>
</comment>
<comment type="catalytic activity">
    <reaction evidence="1">
        <text>RNA(n) + a ribonucleoside 5'-triphosphate = RNA(n+1) + diphosphate</text>
        <dbReference type="Rhea" id="RHEA:21248"/>
        <dbReference type="Rhea" id="RHEA-COMP:14527"/>
        <dbReference type="Rhea" id="RHEA-COMP:17342"/>
        <dbReference type="ChEBI" id="CHEBI:33019"/>
        <dbReference type="ChEBI" id="CHEBI:61557"/>
        <dbReference type="ChEBI" id="CHEBI:140395"/>
        <dbReference type="EC" id="2.7.7.6"/>
    </reaction>
</comment>
<comment type="subunit">
    <text evidence="1">Part of the RNA polymerase complex.</text>
</comment>
<comment type="subcellular location">
    <subcellularLocation>
        <location evidence="1">Cytoplasm</location>
    </subcellularLocation>
</comment>
<comment type="similarity">
    <text evidence="1">Belongs to the archaeal Rpo6/eukaryotic RPB6 RNA polymerase subunit family.</text>
</comment>
<name>RPO6_THEON</name>
<sequence length="57" mass="6281">MFKYTRFERARIVGARALQIAMGAPILIDVPEGITPLDAALLEFEKGIIPLTVIRPS</sequence>
<accession>B6YSQ8</accession>
<protein>
    <recommendedName>
        <fullName evidence="1">DNA-directed RNA polymerase subunit Rpo6</fullName>
        <ecNumber evidence="1">2.7.7.6</ecNumber>
    </recommendedName>
    <alternativeName>
        <fullName evidence="1">DNA-directed RNA polymerase subunit K</fullName>
    </alternativeName>
</protein>
<organism>
    <name type="scientific">Thermococcus onnurineus (strain NA1)</name>
    <dbReference type="NCBI Taxonomy" id="523850"/>
    <lineage>
        <taxon>Archaea</taxon>
        <taxon>Methanobacteriati</taxon>
        <taxon>Methanobacteriota</taxon>
        <taxon>Thermococci</taxon>
        <taxon>Thermococcales</taxon>
        <taxon>Thermococcaceae</taxon>
        <taxon>Thermococcus</taxon>
    </lineage>
</organism>
<reference key="1">
    <citation type="journal article" date="2008" name="J. Bacteriol.">
        <title>The complete genome sequence of Thermococcus onnurineus NA1 reveals a mixed heterotrophic and carboxydotrophic metabolism.</title>
        <authorList>
            <person name="Lee H.S."/>
            <person name="Kang S.G."/>
            <person name="Bae S.S."/>
            <person name="Lim J.K."/>
            <person name="Cho Y."/>
            <person name="Kim Y.J."/>
            <person name="Jeon J.H."/>
            <person name="Cha S.-S."/>
            <person name="Kwon K.K."/>
            <person name="Kim H.-T."/>
            <person name="Park C.-J."/>
            <person name="Lee H.-W."/>
            <person name="Kim S.I."/>
            <person name="Chun J."/>
            <person name="Colwell R.R."/>
            <person name="Kim S.-J."/>
            <person name="Lee J.-H."/>
        </authorList>
    </citation>
    <scope>NUCLEOTIDE SEQUENCE [LARGE SCALE GENOMIC DNA]</scope>
    <source>
        <strain>NA1</strain>
    </source>
</reference>
<evidence type="ECO:0000255" key="1">
    <source>
        <dbReference type="HAMAP-Rule" id="MF_00192"/>
    </source>
</evidence>
<dbReference type="EC" id="2.7.7.6" evidence="1"/>
<dbReference type="EMBL" id="CP000855">
    <property type="protein sequence ID" value="ACJ15595.1"/>
    <property type="molecule type" value="Genomic_DNA"/>
</dbReference>
<dbReference type="RefSeq" id="WP_012571068.1">
    <property type="nucleotide sequence ID" value="NC_011529.1"/>
</dbReference>
<dbReference type="SMR" id="B6YSQ8"/>
<dbReference type="STRING" id="523850.TON_0110"/>
<dbReference type="GeneID" id="7017760"/>
<dbReference type="KEGG" id="ton:TON_0110"/>
<dbReference type="PATRIC" id="fig|523850.10.peg.110"/>
<dbReference type="eggNOG" id="arCOG01268">
    <property type="taxonomic scope" value="Archaea"/>
</dbReference>
<dbReference type="HOGENOM" id="CLU_112527_5_0_2"/>
<dbReference type="OrthoDB" id="10567at2157"/>
<dbReference type="Proteomes" id="UP000002727">
    <property type="component" value="Chromosome"/>
</dbReference>
<dbReference type="GO" id="GO:0005737">
    <property type="term" value="C:cytoplasm"/>
    <property type="evidence" value="ECO:0007669"/>
    <property type="project" value="UniProtKB-SubCell"/>
</dbReference>
<dbReference type="GO" id="GO:0000428">
    <property type="term" value="C:DNA-directed RNA polymerase complex"/>
    <property type="evidence" value="ECO:0007669"/>
    <property type="project" value="UniProtKB-KW"/>
</dbReference>
<dbReference type="GO" id="GO:0003677">
    <property type="term" value="F:DNA binding"/>
    <property type="evidence" value="ECO:0007669"/>
    <property type="project" value="UniProtKB-UniRule"/>
</dbReference>
<dbReference type="GO" id="GO:0003899">
    <property type="term" value="F:DNA-directed RNA polymerase activity"/>
    <property type="evidence" value="ECO:0007669"/>
    <property type="project" value="UniProtKB-UniRule"/>
</dbReference>
<dbReference type="GO" id="GO:0006360">
    <property type="term" value="P:transcription by RNA polymerase I"/>
    <property type="evidence" value="ECO:0007669"/>
    <property type="project" value="TreeGrafter"/>
</dbReference>
<dbReference type="GO" id="GO:0006366">
    <property type="term" value="P:transcription by RNA polymerase II"/>
    <property type="evidence" value="ECO:0007669"/>
    <property type="project" value="TreeGrafter"/>
</dbReference>
<dbReference type="GO" id="GO:0042797">
    <property type="term" value="P:tRNA transcription by RNA polymerase III"/>
    <property type="evidence" value="ECO:0007669"/>
    <property type="project" value="TreeGrafter"/>
</dbReference>
<dbReference type="Gene3D" id="3.90.940.10">
    <property type="match status" value="1"/>
</dbReference>
<dbReference type="HAMAP" id="MF_00192">
    <property type="entry name" value="RNApol_arch_Rpo6"/>
    <property type="match status" value="1"/>
</dbReference>
<dbReference type="InterPro" id="IPR020708">
    <property type="entry name" value="DNA-dir_RNA_polK_14-18kDa_CS"/>
</dbReference>
<dbReference type="InterPro" id="IPR006110">
    <property type="entry name" value="Pol_omega/Rpo6/RPB6"/>
</dbReference>
<dbReference type="InterPro" id="IPR036161">
    <property type="entry name" value="RPB6/omega-like_sf"/>
</dbReference>
<dbReference type="InterPro" id="IPR006111">
    <property type="entry name" value="Rpo6/Rpb6"/>
</dbReference>
<dbReference type="NCBIfam" id="NF002208">
    <property type="entry name" value="PRK01099.1-3"/>
    <property type="match status" value="1"/>
</dbReference>
<dbReference type="PANTHER" id="PTHR47227">
    <property type="entry name" value="DNA-DIRECTED RNA POLYMERASE SUBUNIT K"/>
    <property type="match status" value="1"/>
</dbReference>
<dbReference type="PANTHER" id="PTHR47227:SF5">
    <property type="entry name" value="DNA-DIRECTED RNA POLYMERASES I, II, AND III SUBUNIT RPABC2"/>
    <property type="match status" value="1"/>
</dbReference>
<dbReference type="Pfam" id="PF01192">
    <property type="entry name" value="RNA_pol_Rpb6"/>
    <property type="match status" value="1"/>
</dbReference>
<dbReference type="PIRSF" id="PIRSF000778">
    <property type="entry name" value="RpoK/RPB6"/>
    <property type="match status" value="1"/>
</dbReference>
<dbReference type="SUPFAM" id="SSF63562">
    <property type="entry name" value="RPB6/omega subunit-like"/>
    <property type="match status" value="1"/>
</dbReference>
<dbReference type="PROSITE" id="PS01111">
    <property type="entry name" value="RNA_POL_K_14KD"/>
    <property type="match status" value="1"/>
</dbReference>
<proteinExistence type="inferred from homology"/>
<keyword id="KW-0963">Cytoplasm</keyword>
<keyword id="KW-0240">DNA-directed RNA polymerase</keyword>
<keyword id="KW-0548">Nucleotidyltransferase</keyword>
<keyword id="KW-0804">Transcription</keyword>
<keyword id="KW-0808">Transferase</keyword>
<feature type="chain" id="PRO_1000098998" description="DNA-directed RNA polymerase subunit Rpo6">
    <location>
        <begin position="1"/>
        <end position="57"/>
    </location>
</feature>